<sequence>MSHISVLLFETVESLLADRTTGVYIDATFGRGGHTRLLLSKLDENARVYAFDKDPQALEVAAALAQEDPRFTIIHASFADIKEKMQEIGVQSVDGIMADLGVSSPQLDQAERGFSFMQDGPLDMRMDNSKGLTAAEWLLEVEEEDLANIIYQYGEERYSRRIARAIKQAGKLDTTAQLAEIVKTAHPKWEKHKHPATRTFQAIRIAINKELDDIEVFLPQAVDLLKPKGRLSVISFHSLEDRLIKQFIQKESTLAEDSGWGMPQQQVDTRRLKKISRVRASEEEVKANPRSRSAWLRVAERLEQKGA</sequence>
<organism>
    <name type="scientific">Acinetobacter baumannii (strain ACICU)</name>
    <dbReference type="NCBI Taxonomy" id="405416"/>
    <lineage>
        <taxon>Bacteria</taxon>
        <taxon>Pseudomonadati</taxon>
        <taxon>Pseudomonadota</taxon>
        <taxon>Gammaproteobacteria</taxon>
        <taxon>Moraxellales</taxon>
        <taxon>Moraxellaceae</taxon>
        <taxon>Acinetobacter</taxon>
        <taxon>Acinetobacter calcoaceticus/baumannii complex</taxon>
    </lineage>
</organism>
<accession>B2I0K7</accession>
<feature type="chain" id="PRO_0000386690" description="Ribosomal RNA small subunit methyltransferase H">
    <location>
        <begin position="1"/>
        <end position="307"/>
    </location>
</feature>
<feature type="binding site" evidence="1">
    <location>
        <begin position="32"/>
        <end position="34"/>
    </location>
    <ligand>
        <name>S-adenosyl-L-methionine</name>
        <dbReference type="ChEBI" id="CHEBI:59789"/>
    </ligand>
</feature>
<feature type="binding site" evidence="1">
    <location>
        <position position="52"/>
    </location>
    <ligand>
        <name>S-adenosyl-L-methionine</name>
        <dbReference type="ChEBI" id="CHEBI:59789"/>
    </ligand>
</feature>
<feature type="binding site" evidence="1">
    <location>
        <position position="78"/>
    </location>
    <ligand>
        <name>S-adenosyl-L-methionine</name>
        <dbReference type="ChEBI" id="CHEBI:59789"/>
    </ligand>
</feature>
<feature type="binding site" evidence="1">
    <location>
        <position position="99"/>
    </location>
    <ligand>
        <name>S-adenosyl-L-methionine</name>
        <dbReference type="ChEBI" id="CHEBI:59789"/>
    </ligand>
</feature>
<feature type="binding site" evidence="1">
    <location>
        <position position="106"/>
    </location>
    <ligand>
        <name>S-adenosyl-L-methionine</name>
        <dbReference type="ChEBI" id="CHEBI:59789"/>
    </ligand>
</feature>
<reference key="1">
    <citation type="journal article" date="2008" name="Antimicrob. Agents Chemother.">
        <title>Whole-genome pyrosequencing of an epidemic multidrug-resistant Acinetobacter baumannii strain belonging to the European clone II group.</title>
        <authorList>
            <person name="Iacono M."/>
            <person name="Villa L."/>
            <person name="Fortini D."/>
            <person name="Bordoni R."/>
            <person name="Imperi F."/>
            <person name="Bonnal R.J."/>
            <person name="Sicheritz-Ponten T."/>
            <person name="De Bellis G."/>
            <person name="Visca P."/>
            <person name="Cassone A."/>
            <person name="Carattoli A."/>
        </authorList>
    </citation>
    <scope>NUCLEOTIDE SEQUENCE [LARGE SCALE GENOMIC DNA]</scope>
    <source>
        <strain>ACICU</strain>
    </source>
</reference>
<gene>
    <name evidence="1" type="primary">rsmH</name>
    <name type="synonym">mraW</name>
    <name type="ordered locus">ACICU_03403</name>
</gene>
<keyword id="KW-0963">Cytoplasm</keyword>
<keyword id="KW-0489">Methyltransferase</keyword>
<keyword id="KW-0698">rRNA processing</keyword>
<keyword id="KW-0949">S-adenosyl-L-methionine</keyword>
<keyword id="KW-0808">Transferase</keyword>
<evidence type="ECO:0000255" key="1">
    <source>
        <dbReference type="HAMAP-Rule" id="MF_01007"/>
    </source>
</evidence>
<proteinExistence type="inferred from homology"/>
<protein>
    <recommendedName>
        <fullName evidence="1">Ribosomal RNA small subunit methyltransferase H</fullName>
        <ecNumber evidence="1">2.1.1.199</ecNumber>
    </recommendedName>
    <alternativeName>
        <fullName evidence="1">16S rRNA m(4)C1402 methyltransferase</fullName>
    </alternativeName>
    <alternativeName>
        <fullName evidence="1">rRNA (cytosine-N(4)-)-methyltransferase RsmH</fullName>
    </alternativeName>
</protein>
<comment type="function">
    <text evidence="1">Specifically methylates the N4 position of cytidine in position 1402 (C1402) of 16S rRNA.</text>
</comment>
<comment type="catalytic activity">
    <reaction evidence="1">
        <text>cytidine(1402) in 16S rRNA + S-adenosyl-L-methionine = N(4)-methylcytidine(1402) in 16S rRNA + S-adenosyl-L-homocysteine + H(+)</text>
        <dbReference type="Rhea" id="RHEA:42928"/>
        <dbReference type="Rhea" id="RHEA-COMP:10286"/>
        <dbReference type="Rhea" id="RHEA-COMP:10287"/>
        <dbReference type="ChEBI" id="CHEBI:15378"/>
        <dbReference type="ChEBI" id="CHEBI:57856"/>
        <dbReference type="ChEBI" id="CHEBI:59789"/>
        <dbReference type="ChEBI" id="CHEBI:74506"/>
        <dbReference type="ChEBI" id="CHEBI:82748"/>
        <dbReference type="EC" id="2.1.1.199"/>
    </reaction>
</comment>
<comment type="subcellular location">
    <subcellularLocation>
        <location evidence="1">Cytoplasm</location>
    </subcellularLocation>
</comment>
<comment type="similarity">
    <text evidence="1">Belongs to the methyltransferase superfamily. RsmH family.</text>
</comment>
<dbReference type="EC" id="2.1.1.199" evidence="1"/>
<dbReference type="EMBL" id="CP000863">
    <property type="protein sequence ID" value="ACC58713.1"/>
    <property type="molecule type" value="Genomic_DNA"/>
</dbReference>
<dbReference type="RefSeq" id="WP_000018346.1">
    <property type="nucleotide sequence ID" value="NZ_CP031380.1"/>
</dbReference>
<dbReference type="SMR" id="B2I0K7"/>
<dbReference type="GeneID" id="92895440"/>
<dbReference type="KEGG" id="abc:ACICU_03403"/>
<dbReference type="HOGENOM" id="CLU_038422_2_0_6"/>
<dbReference type="Proteomes" id="UP000008839">
    <property type="component" value="Chromosome"/>
</dbReference>
<dbReference type="GO" id="GO:0005737">
    <property type="term" value="C:cytoplasm"/>
    <property type="evidence" value="ECO:0007669"/>
    <property type="project" value="UniProtKB-SubCell"/>
</dbReference>
<dbReference type="GO" id="GO:0071424">
    <property type="term" value="F:rRNA (cytosine-N4-)-methyltransferase activity"/>
    <property type="evidence" value="ECO:0007669"/>
    <property type="project" value="UniProtKB-UniRule"/>
</dbReference>
<dbReference type="GO" id="GO:0070475">
    <property type="term" value="P:rRNA base methylation"/>
    <property type="evidence" value="ECO:0007669"/>
    <property type="project" value="UniProtKB-UniRule"/>
</dbReference>
<dbReference type="CDD" id="cd02440">
    <property type="entry name" value="AdoMet_MTases"/>
    <property type="match status" value="1"/>
</dbReference>
<dbReference type="FunFam" id="1.10.150.170:FF:000001">
    <property type="entry name" value="Ribosomal RNA small subunit methyltransferase H"/>
    <property type="match status" value="1"/>
</dbReference>
<dbReference type="Gene3D" id="1.10.150.170">
    <property type="entry name" value="Putative methyltransferase TM0872, insert domain"/>
    <property type="match status" value="1"/>
</dbReference>
<dbReference type="Gene3D" id="3.40.50.150">
    <property type="entry name" value="Vaccinia Virus protein VP39"/>
    <property type="match status" value="1"/>
</dbReference>
<dbReference type="HAMAP" id="MF_01007">
    <property type="entry name" value="16SrRNA_methyltr_H"/>
    <property type="match status" value="1"/>
</dbReference>
<dbReference type="InterPro" id="IPR002903">
    <property type="entry name" value="RsmH"/>
</dbReference>
<dbReference type="InterPro" id="IPR023397">
    <property type="entry name" value="SAM-dep_MeTrfase_MraW_recog"/>
</dbReference>
<dbReference type="InterPro" id="IPR029063">
    <property type="entry name" value="SAM-dependent_MTases_sf"/>
</dbReference>
<dbReference type="NCBIfam" id="TIGR00006">
    <property type="entry name" value="16S rRNA (cytosine(1402)-N(4))-methyltransferase RsmH"/>
    <property type="match status" value="1"/>
</dbReference>
<dbReference type="PANTHER" id="PTHR11265:SF0">
    <property type="entry name" value="12S RRNA N4-METHYLCYTIDINE METHYLTRANSFERASE"/>
    <property type="match status" value="1"/>
</dbReference>
<dbReference type="PANTHER" id="PTHR11265">
    <property type="entry name" value="S-ADENOSYL-METHYLTRANSFERASE MRAW"/>
    <property type="match status" value="1"/>
</dbReference>
<dbReference type="Pfam" id="PF01795">
    <property type="entry name" value="Methyltransf_5"/>
    <property type="match status" value="1"/>
</dbReference>
<dbReference type="PIRSF" id="PIRSF004486">
    <property type="entry name" value="MraW"/>
    <property type="match status" value="1"/>
</dbReference>
<dbReference type="SUPFAM" id="SSF81799">
    <property type="entry name" value="Putative methyltransferase TM0872, insert domain"/>
    <property type="match status" value="1"/>
</dbReference>
<dbReference type="SUPFAM" id="SSF53335">
    <property type="entry name" value="S-adenosyl-L-methionine-dependent methyltransferases"/>
    <property type="match status" value="1"/>
</dbReference>
<name>RSMH_ACIBC</name>